<gene>
    <name evidence="1" type="primary">rpsG</name>
    <name type="ordered locus">Swit_1357</name>
</gene>
<protein>
    <recommendedName>
        <fullName evidence="1">Small ribosomal subunit protein uS7</fullName>
    </recommendedName>
    <alternativeName>
        <fullName evidence="2">30S ribosomal protein S7</fullName>
    </alternativeName>
</protein>
<dbReference type="EMBL" id="CP000699">
    <property type="protein sequence ID" value="ABQ67722.1"/>
    <property type="molecule type" value="Genomic_DNA"/>
</dbReference>
<dbReference type="SMR" id="A5V606"/>
<dbReference type="STRING" id="392499.Swit_1357"/>
<dbReference type="PaxDb" id="392499-Swit_1357"/>
<dbReference type="KEGG" id="swi:Swit_1357"/>
<dbReference type="eggNOG" id="COG0049">
    <property type="taxonomic scope" value="Bacteria"/>
</dbReference>
<dbReference type="HOGENOM" id="CLU_072226_1_1_5"/>
<dbReference type="OrthoDB" id="9807653at2"/>
<dbReference type="Proteomes" id="UP000001989">
    <property type="component" value="Chromosome"/>
</dbReference>
<dbReference type="GO" id="GO:0015935">
    <property type="term" value="C:small ribosomal subunit"/>
    <property type="evidence" value="ECO:0007669"/>
    <property type="project" value="InterPro"/>
</dbReference>
<dbReference type="GO" id="GO:0019843">
    <property type="term" value="F:rRNA binding"/>
    <property type="evidence" value="ECO:0007669"/>
    <property type="project" value="UniProtKB-UniRule"/>
</dbReference>
<dbReference type="GO" id="GO:0003735">
    <property type="term" value="F:structural constituent of ribosome"/>
    <property type="evidence" value="ECO:0007669"/>
    <property type="project" value="InterPro"/>
</dbReference>
<dbReference type="GO" id="GO:0000049">
    <property type="term" value="F:tRNA binding"/>
    <property type="evidence" value="ECO:0007669"/>
    <property type="project" value="UniProtKB-UniRule"/>
</dbReference>
<dbReference type="GO" id="GO:0006412">
    <property type="term" value="P:translation"/>
    <property type="evidence" value="ECO:0007669"/>
    <property type="project" value="UniProtKB-UniRule"/>
</dbReference>
<dbReference type="CDD" id="cd14869">
    <property type="entry name" value="uS7_Bacteria"/>
    <property type="match status" value="1"/>
</dbReference>
<dbReference type="FunFam" id="1.10.455.10:FF:000001">
    <property type="entry name" value="30S ribosomal protein S7"/>
    <property type="match status" value="1"/>
</dbReference>
<dbReference type="Gene3D" id="1.10.455.10">
    <property type="entry name" value="Ribosomal protein S7 domain"/>
    <property type="match status" value="1"/>
</dbReference>
<dbReference type="HAMAP" id="MF_00480_B">
    <property type="entry name" value="Ribosomal_uS7_B"/>
    <property type="match status" value="1"/>
</dbReference>
<dbReference type="InterPro" id="IPR000235">
    <property type="entry name" value="Ribosomal_uS7"/>
</dbReference>
<dbReference type="InterPro" id="IPR005717">
    <property type="entry name" value="Ribosomal_uS7_bac/org-type"/>
</dbReference>
<dbReference type="InterPro" id="IPR020606">
    <property type="entry name" value="Ribosomal_uS7_CS"/>
</dbReference>
<dbReference type="InterPro" id="IPR023798">
    <property type="entry name" value="Ribosomal_uS7_dom"/>
</dbReference>
<dbReference type="InterPro" id="IPR036823">
    <property type="entry name" value="Ribosomal_uS7_dom_sf"/>
</dbReference>
<dbReference type="NCBIfam" id="TIGR01029">
    <property type="entry name" value="rpsG_bact"/>
    <property type="match status" value="1"/>
</dbReference>
<dbReference type="PANTHER" id="PTHR11205">
    <property type="entry name" value="RIBOSOMAL PROTEIN S7"/>
    <property type="match status" value="1"/>
</dbReference>
<dbReference type="Pfam" id="PF00177">
    <property type="entry name" value="Ribosomal_S7"/>
    <property type="match status" value="1"/>
</dbReference>
<dbReference type="PIRSF" id="PIRSF002122">
    <property type="entry name" value="RPS7p_RPS7a_RPS5e_RPS7o"/>
    <property type="match status" value="1"/>
</dbReference>
<dbReference type="SUPFAM" id="SSF47973">
    <property type="entry name" value="Ribosomal protein S7"/>
    <property type="match status" value="1"/>
</dbReference>
<dbReference type="PROSITE" id="PS00052">
    <property type="entry name" value="RIBOSOMAL_S7"/>
    <property type="match status" value="1"/>
</dbReference>
<feature type="chain" id="PRO_1000014296" description="Small ribosomal subunit protein uS7">
    <location>
        <begin position="1"/>
        <end position="156"/>
    </location>
</feature>
<comment type="function">
    <text evidence="1">One of the primary rRNA binding proteins, it binds directly to 16S rRNA where it nucleates assembly of the head domain of the 30S subunit. Is located at the subunit interface close to the decoding center, probably blocks exit of the E-site tRNA.</text>
</comment>
<comment type="subunit">
    <text evidence="1">Part of the 30S ribosomal subunit. Contacts proteins S9 and S11.</text>
</comment>
<comment type="similarity">
    <text evidence="1">Belongs to the universal ribosomal protein uS7 family.</text>
</comment>
<proteinExistence type="inferred from homology"/>
<evidence type="ECO:0000255" key="1">
    <source>
        <dbReference type="HAMAP-Rule" id="MF_00480"/>
    </source>
</evidence>
<evidence type="ECO:0000305" key="2"/>
<organism>
    <name type="scientific">Rhizorhabdus wittichii (strain DSM 6014 / CCUG 31198 / JCM 15750 / NBRC 105917 / EY 4224 / RW1)</name>
    <name type="common">Sphingomonas wittichii</name>
    <dbReference type="NCBI Taxonomy" id="392499"/>
    <lineage>
        <taxon>Bacteria</taxon>
        <taxon>Pseudomonadati</taxon>
        <taxon>Pseudomonadota</taxon>
        <taxon>Alphaproteobacteria</taxon>
        <taxon>Sphingomonadales</taxon>
        <taxon>Sphingomonadaceae</taxon>
        <taxon>Rhizorhabdus</taxon>
    </lineage>
</organism>
<accession>A5V606</accession>
<name>RS7_RHIWR</name>
<reference key="1">
    <citation type="journal article" date="2010" name="J. Bacteriol.">
        <title>Genome sequence of the dioxin-mineralizing bacterium Sphingomonas wittichii RW1.</title>
        <authorList>
            <person name="Miller T.R."/>
            <person name="Delcher A.L."/>
            <person name="Salzberg S.L."/>
            <person name="Saunders E."/>
            <person name="Detter J.C."/>
            <person name="Halden R.U."/>
        </authorList>
    </citation>
    <scope>NUCLEOTIDE SEQUENCE [LARGE SCALE GENOMIC DNA]</scope>
    <source>
        <strain>DSM 6014 / CCUG 31198 / JCM 15750 / NBRC 105917 / EY 4224 / RW1</strain>
    </source>
</reference>
<keyword id="KW-1185">Reference proteome</keyword>
<keyword id="KW-0687">Ribonucleoprotein</keyword>
<keyword id="KW-0689">Ribosomal protein</keyword>
<keyword id="KW-0694">RNA-binding</keyword>
<keyword id="KW-0699">rRNA-binding</keyword>
<keyword id="KW-0820">tRNA-binding</keyword>
<sequence length="156" mass="17619">MARRRRPEKREILPDPKFGDVVLSKFMNSVMLDGKKSVAEGIVYGALETIETRAKREPLGVFHEALNNVKPGIEVRSRRVGGATYQVPVEVRPDRSQALAIRWLISAARARSEHTMAGRLSGELLDAANNRGNAVKKREDTHRMAEANRAFSHYRW</sequence>